<keyword id="KW-0229">DNA integration</keyword>
<keyword id="KW-0233">DNA recombination</keyword>
<keyword id="KW-0238">DNA-binding</keyword>
<keyword id="KW-0614">Plasmid</keyword>
<keyword id="KW-1179">Viral genome integration</keyword>
<keyword id="KW-1160">Virus entry into host cell</keyword>
<name>GP7D_CHLMU</name>
<evidence type="ECO:0000255" key="1">
    <source>
        <dbReference type="PROSITE-ProRule" id="PRU01246"/>
    </source>
</evidence>
<evidence type="ECO:0000255" key="2">
    <source>
        <dbReference type="PROSITE-ProRule" id="PRU01248"/>
    </source>
</evidence>
<evidence type="ECO:0000305" key="3"/>
<feature type="chain" id="PRO_0000197561" description="Virulence plasmid integrase pGP7-D">
    <location>
        <begin position="1"/>
        <end position="305"/>
    </location>
</feature>
<feature type="domain" description="Core-binding (CB)" evidence="2">
    <location>
        <begin position="13"/>
        <end position="99"/>
    </location>
</feature>
<feature type="domain" description="Tyr recombinase" evidence="1">
    <location>
        <begin position="127"/>
        <end position="303"/>
    </location>
</feature>
<feature type="active site" evidence="1">
    <location>
        <position position="188"/>
    </location>
</feature>
<feature type="active site" evidence="1">
    <location>
        <position position="257"/>
    </location>
</feature>
<feature type="active site" description="O-(3'-phospho-DNA)-tyrosine intermediate" evidence="1">
    <location>
        <position position="289"/>
    </location>
</feature>
<dbReference type="EMBL" id="X78726">
    <property type="protein sequence ID" value="CAA55372.1"/>
    <property type="molecule type" value="Genomic_DNA"/>
</dbReference>
<dbReference type="EMBL" id="AE002162">
    <property type="protein sequence ID" value="AAF39715.1"/>
    <property type="molecule type" value="Genomic_DNA"/>
</dbReference>
<dbReference type="PIR" id="S44159">
    <property type="entry name" value="S44159"/>
</dbReference>
<dbReference type="RefSeq" id="WP_010231978.1">
    <property type="nucleotide sequence ID" value="NC_002182.1"/>
</dbReference>
<dbReference type="SMR" id="Q46435"/>
<dbReference type="GeneID" id="1245522"/>
<dbReference type="KEGG" id="cmu:TC_A01"/>
<dbReference type="PATRIC" id="fig|243161.6.peg.1"/>
<dbReference type="eggNOG" id="COG0582">
    <property type="taxonomic scope" value="Bacteria"/>
</dbReference>
<dbReference type="HOGENOM" id="CLU_078727_0_0_0"/>
<dbReference type="OrthoDB" id="17343at2"/>
<dbReference type="PHI-base" id="PHI:4929"/>
<dbReference type="Proteomes" id="UP000000800">
    <property type="component" value="Plasmid pMoPn"/>
</dbReference>
<dbReference type="GO" id="GO:0003677">
    <property type="term" value="F:DNA binding"/>
    <property type="evidence" value="ECO:0007669"/>
    <property type="project" value="UniProtKB-KW"/>
</dbReference>
<dbReference type="GO" id="GO:0015074">
    <property type="term" value="P:DNA integration"/>
    <property type="evidence" value="ECO:0007669"/>
    <property type="project" value="UniProtKB-KW"/>
</dbReference>
<dbReference type="GO" id="GO:0006310">
    <property type="term" value="P:DNA recombination"/>
    <property type="evidence" value="ECO:0007669"/>
    <property type="project" value="UniProtKB-KW"/>
</dbReference>
<dbReference type="GO" id="GO:0075713">
    <property type="term" value="P:establishment of integrated proviral latency"/>
    <property type="evidence" value="ECO:0007669"/>
    <property type="project" value="UniProtKB-KW"/>
</dbReference>
<dbReference type="GO" id="GO:0046718">
    <property type="term" value="P:symbiont entry into host cell"/>
    <property type="evidence" value="ECO:0007669"/>
    <property type="project" value="UniProtKB-KW"/>
</dbReference>
<dbReference type="GO" id="GO:0044826">
    <property type="term" value="P:viral genome integration into host DNA"/>
    <property type="evidence" value="ECO:0007669"/>
    <property type="project" value="UniProtKB-KW"/>
</dbReference>
<dbReference type="CDD" id="cd00397">
    <property type="entry name" value="DNA_BRE_C"/>
    <property type="match status" value="1"/>
</dbReference>
<dbReference type="Gene3D" id="1.10.443.10">
    <property type="entry name" value="Intergrase catalytic core"/>
    <property type="match status" value="1"/>
</dbReference>
<dbReference type="InterPro" id="IPR044068">
    <property type="entry name" value="CB"/>
</dbReference>
<dbReference type="InterPro" id="IPR011010">
    <property type="entry name" value="DNA_brk_join_enz"/>
</dbReference>
<dbReference type="InterPro" id="IPR013762">
    <property type="entry name" value="Integrase-like_cat_sf"/>
</dbReference>
<dbReference type="InterPro" id="IPR002104">
    <property type="entry name" value="Integrase_catalytic"/>
</dbReference>
<dbReference type="Pfam" id="PF00589">
    <property type="entry name" value="Phage_integrase"/>
    <property type="match status" value="1"/>
</dbReference>
<dbReference type="SUPFAM" id="SSF56349">
    <property type="entry name" value="DNA breaking-rejoining enzymes"/>
    <property type="match status" value="1"/>
</dbReference>
<dbReference type="PROSITE" id="PS51900">
    <property type="entry name" value="CB"/>
    <property type="match status" value="1"/>
</dbReference>
<dbReference type="PROSITE" id="PS51898">
    <property type="entry name" value="TYR_RECOMBINASE"/>
    <property type="match status" value="1"/>
</dbReference>
<geneLocation type="plasmid">
    <name>pMoPn</name>
</geneLocation>
<gene>
    <name type="ordered locus">TC_A01</name>
</gene>
<accession>Q46435</accession>
<organism>
    <name type="scientific">Chlamydia muridarum (strain MoPn / Nigg)</name>
    <dbReference type="NCBI Taxonomy" id="243161"/>
    <lineage>
        <taxon>Bacteria</taxon>
        <taxon>Pseudomonadati</taxon>
        <taxon>Chlamydiota</taxon>
        <taxon>Chlamydiia</taxon>
        <taxon>Chlamydiales</taxon>
        <taxon>Chlamydiaceae</taxon>
        <taxon>Chlamydia/Chlamydophila group</taxon>
        <taxon>Chlamydia</taxon>
    </lineage>
</organism>
<comment type="similarity">
    <text evidence="3">Belongs to the 'phage' integrase family.</text>
</comment>
<protein>
    <recommendedName>
        <fullName>Virulence plasmid integrase pGP7-D</fullName>
    </recommendedName>
</protein>
<reference key="1">
    <citation type="journal article" date="1997" name="Microbiology">
        <title>Plasmid diversity in Chlamydia.</title>
        <authorList>
            <person name="Thomas N.S."/>
            <person name="Lusher M."/>
            <person name="Storey C.C."/>
            <person name="Clarke I.N."/>
        </authorList>
    </citation>
    <scope>NUCLEOTIDE SEQUENCE [GENOMIC DNA]</scope>
    <source>
        <strain>MoPn / Nigg</strain>
    </source>
</reference>
<reference key="2">
    <citation type="journal article" date="2000" name="Nucleic Acids Res.">
        <title>Genome sequences of Chlamydia trachomatis MoPn and Chlamydia pneumoniae AR39.</title>
        <authorList>
            <person name="Read T.D."/>
            <person name="Brunham R.C."/>
            <person name="Shen C."/>
            <person name="Gill S.R."/>
            <person name="Heidelberg J.F."/>
            <person name="White O."/>
            <person name="Hickey E.K."/>
            <person name="Peterson J.D."/>
            <person name="Utterback T.R."/>
            <person name="Berry K.J."/>
            <person name="Bass S."/>
            <person name="Linher K.D."/>
            <person name="Weidman J.F."/>
            <person name="Khouri H.M."/>
            <person name="Craven B."/>
            <person name="Bowman C."/>
            <person name="Dodson R.J."/>
            <person name="Gwinn M.L."/>
            <person name="Nelson W.C."/>
            <person name="DeBoy R.T."/>
            <person name="Kolonay J.F."/>
            <person name="McClarty G."/>
            <person name="Salzberg S.L."/>
            <person name="Eisen J.A."/>
            <person name="Fraser C.M."/>
        </authorList>
    </citation>
    <scope>NUCLEOTIDE SEQUENCE [LARGE SCALE GENOMIC DNA]</scope>
    <source>
        <strain>MoPn / Nigg</strain>
    </source>
</reference>
<proteinExistence type="inferred from homology"/>
<sequence>MNSKFYHRSRLFLTFGEASEIWLSTLSPLTRKNYASGIKFLVSLKVLDLTKTLDNAISFDHSESLFKIKSLTIFNGKPVSEASKQARAACYISFTKFLYRLTKGYINPAIPLKDFGNTTFFKIRDRVKTVSISKKEWTVFFEALRLVSYRDYLIGKLIVQGIRKLDEILSLCMEDLFFASNQISFRIKKRQNKEINIPITFPFSLMKELKDYVGGRNGRVFISEDGSPIATSQVVHNFKIAALRSAMTTKITPRVLRASALIHLKQMGLRDEEIMRVSCLSSKQSLCSYVCSGGNSSVANIPTIL</sequence>